<feature type="chain" id="PRO_1000198341" description="UPF0304 protein HSM_1818">
    <location>
        <begin position="1"/>
        <end position="164"/>
    </location>
</feature>
<sequence>MEMTSTQRLILANQYRLMGLLDPTNTQKYQRLEAIVKGGFGLELKELDKEFSDLSEAECLTVLNTLEMYNALQISYNNLPDKSALTPHRLQFAGYCAVREKKYLNYLRFITSVEGKYQEFMRCEHGCDSQTPMWDKYLKMLDAWRACPHEYHLSMAEIQKILNA</sequence>
<name>Y1818_HISS2</name>
<dbReference type="EMBL" id="CP000947">
    <property type="protein sequence ID" value="ACA31605.1"/>
    <property type="molecule type" value="Genomic_DNA"/>
</dbReference>
<dbReference type="RefSeq" id="WP_012340916.1">
    <property type="nucleotide sequence ID" value="NC_010519.1"/>
</dbReference>
<dbReference type="SMR" id="B0UWD5"/>
<dbReference type="STRING" id="228400.HSM_1818"/>
<dbReference type="GeneID" id="31488126"/>
<dbReference type="KEGG" id="hsm:HSM_1818"/>
<dbReference type="HOGENOM" id="CLU_101021_1_0_6"/>
<dbReference type="Gene3D" id="1.10.287.680">
    <property type="entry name" value="Helix hairpin bin"/>
    <property type="match status" value="1"/>
</dbReference>
<dbReference type="Gene3D" id="1.10.3190.10">
    <property type="entry name" value="yfbu gene product, domain 2"/>
    <property type="match status" value="1"/>
</dbReference>
<dbReference type="HAMAP" id="MF_00762">
    <property type="entry name" value="UPF0304"/>
    <property type="match status" value="1"/>
</dbReference>
<dbReference type="InterPro" id="IPR005587">
    <property type="entry name" value="UPF0304_YfbU"/>
</dbReference>
<dbReference type="InterPro" id="IPR023146">
    <property type="entry name" value="YfbU_alpha-helical_sf"/>
</dbReference>
<dbReference type="InterPro" id="IPR023145">
    <property type="entry name" value="YfbU_helix-hairpin_sf"/>
</dbReference>
<dbReference type="NCBIfam" id="NF003936">
    <property type="entry name" value="PRK05445.1"/>
    <property type="match status" value="1"/>
</dbReference>
<dbReference type="Pfam" id="PF03887">
    <property type="entry name" value="YfbU"/>
    <property type="match status" value="1"/>
</dbReference>
<dbReference type="PIRSF" id="PIRSF006272">
    <property type="entry name" value="UCP006272"/>
    <property type="match status" value="1"/>
</dbReference>
<dbReference type="SUPFAM" id="SSF116960">
    <property type="entry name" value="YfbU-like"/>
    <property type="match status" value="1"/>
</dbReference>
<evidence type="ECO:0000255" key="1">
    <source>
        <dbReference type="HAMAP-Rule" id="MF_00762"/>
    </source>
</evidence>
<gene>
    <name type="ordered locus">HSM_1818</name>
</gene>
<comment type="similarity">
    <text evidence="1">Belongs to the UPF0304 family.</text>
</comment>
<organism>
    <name type="scientific">Histophilus somni (strain 2336)</name>
    <name type="common">Haemophilus somnus</name>
    <dbReference type="NCBI Taxonomy" id="228400"/>
    <lineage>
        <taxon>Bacteria</taxon>
        <taxon>Pseudomonadati</taxon>
        <taxon>Pseudomonadota</taxon>
        <taxon>Gammaproteobacteria</taxon>
        <taxon>Pasteurellales</taxon>
        <taxon>Pasteurellaceae</taxon>
        <taxon>Histophilus</taxon>
    </lineage>
</organism>
<accession>B0UWD5</accession>
<proteinExistence type="inferred from homology"/>
<reference key="1">
    <citation type="submission" date="2008-02" db="EMBL/GenBank/DDBJ databases">
        <title>Complete sequence of Haemophilus somnus 2336.</title>
        <authorList>
            <consortium name="US DOE Joint Genome Institute"/>
            <person name="Siddaramappa S."/>
            <person name="Duncan A.J."/>
            <person name="Challacombe J.F."/>
            <person name="Rainey D."/>
            <person name="Gillaspy A.F."/>
            <person name="Carson M."/>
            <person name="Gipson J."/>
            <person name="Gipson M."/>
            <person name="Bruce D."/>
            <person name="Detter J.C."/>
            <person name="Han C.S."/>
            <person name="Land M."/>
            <person name="Tapia R."/>
            <person name="Thompson L.S."/>
            <person name="Orvis J."/>
            <person name="Zaitshik J."/>
            <person name="Barnes G."/>
            <person name="Brettin T.S."/>
            <person name="Dyer D.W."/>
            <person name="Inzana T.J."/>
        </authorList>
    </citation>
    <scope>NUCLEOTIDE SEQUENCE [LARGE SCALE GENOMIC DNA]</scope>
    <source>
        <strain>2336</strain>
    </source>
</reference>
<protein>
    <recommendedName>
        <fullName evidence="1">UPF0304 protein HSM_1818</fullName>
    </recommendedName>
</protein>